<comment type="function">
    <text evidence="1">An essential GTPase which binds GTP, GDP and possibly (p)ppGpp with moderate affinity, with high nucleotide exchange rates and a fairly low GTP hydrolysis rate. Plays a role in control of the cell cycle, stress response, ribosome biogenesis and in those bacteria that undergo differentiation, in morphogenesis control.</text>
</comment>
<comment type="cofactor">
    <cofactor evidence="1">
        <name>Mg(2+)</name>
        <dbReference type="ChEBI" id="CHEBI:18420"/>
    </cofactor>
</comment>
<comment type="subunit">
    <text evidence="1">Monomer.</text>
</comment>
<comment type="subcellular location">
    <subcellularLocation>
        <location evidence="1">Cytoplasm</location>
    </subcellularLocation>
</comment>
<comment type="similarity">
    <text evidence="1">Belongs to the TRAFAC class OBG-HflX-like GTPase superfamily. OBG GTPase family.</text>
</comment>
<reference key="1">
    <citation type="journal article" date="2001" name="Nature">
        <title>Massive gene decay in the leprosy bacillus.</title>
        <authorList>
            <person name="Cole S.T."/>
            <person name="Eiglmeier K."/>
            <person name="Parkhill J."/>
            <person name="James K.D."/>
            <person name="Thomson N.R."/>
            <person name="Wheeler P.R."/>
            <person name="Honore N."/>
            <person name="Garnier T."/>
            <person name="Churcher C.M."/>
            <person name="Harris D.E."/>
            <person name="Mungall K.L."/>
            <person name="Basham D."/>
            <person name="Brown D."/>
            <person name="Chillingworth T."/>
            <person name="Connor R."/>
            <person name="Davies R.M."/>
            <person name="Devlin K."/>
            <person name="Duthoy S."/>
            <person name="Feltwell T."/>
            <person name="Fraser A."/>
            <person name="Hamlin N."/>
            <person name="Holroyd S."/>
            <person name="Hornsby T."/>
            <person name="Jagels K."/>
            <person name="Lacroix C."/>
            <person name="Maclean J."/>
            <person name="Moule S."/>
            <person name="Murphy L.D."/>
            <person name="Oliver K."/>
            <person name="Quail M.A."/>
            <person name="Rajandream M.A."/>
            <person name="Rutherford K.M."/>
            <person name="Rutter S."/>
            <person name="Seeger K."/>
            <person name="Simon S."/>
            <person name="Simmonds M."/>
            <person name="Skelton J."/>
            <person name="Squares R."/>
            <person name="Squares S."/>
            <person name="Stevens K."/>
            <person name="Taylor K."/>
            <person name="Whitehead S."/>
            <person name="Woodward J.R."/>
            <person name="Barrell B.G."/>
        </authorList>
    </citation>
    <scope>NUCLEOTIDE SEQUENCE [LARGE SCALE GENOMIC DNA]</scope>
    <source>
        <strain>TN</strain>
    </source>
</reference>
<keyword id="KW-0963">Cytoplasm</keyword>
<keyword id="KW-0342">GTP-binding</keyword>
<keyword id="KW-0378">Hydrolase</keyword>
<keyword id="KW-0460">Magnesium</keyword>
<keyword id="KW-0479">Metal-binding</keyword>
<keyword id="KW-0547">Nucleotide-binding</keyword>
<keyword id="KW-1185">Reference proteome</keyword>
<sequence>MPRFVDRVVIHTWAGSGGNGCASIHRSKFKPLGGPDGGNGGRGGSVVFVVDPHVHTLLDFHFRPHITAPSGKQGMGNNRDGAAGADLEVKVPDGTVVLDEDGRLLADLVGAGTRFQAAAGGRGGLGNAALASRTRKVPGFALLGEQGESRDLTLELKSVADVGLIGFPSAGKSSLVSVISAAKPKIADYPFTTLVPNLGVVSVGEHAFTVADVPGLIPGASAGRGLGLDFLRHIERCAVLVHVVDCTSVEPGRDPILDIAALEAELAAYTPTLQGDTTLGDFAERPRAVVLNKIDVPDARELAEFVCDNIAAERGWPVFSVSTVTRENLQSLIFGLWQMISAYHAARSEPAPGRSLIRPVPVDDSGFTVEPDGQGGFVVTGTRPERWIHQTNFDNAEAVGYLADRLARLGVEDELLRVGAQPGCTVSIGGMTFDWEPQKPAGHPVAMSGRGTDARLESTDPVGTAERKVARHQRHKHGG</sequence>
<feature type="chain" id="PRO_0000386054" description="GTPase Obg">
    <location>
        <begin position="1"/>
        <end position="479"/>
    </location>
</feature>
<feature type="domain" description="Obg" evidence="3">
    <location>
        <begin position="2"/>
        <end position="159"/>
    </location>
</feature>
<feature type="domain" description="OBG-type G" evidence="1">
    <location>
        <begin position="160"/>
        <end position="341"/>
    </location>
</feature>
<feature type="domain" description="OCT" evidence="2">
    <location>
        <begin position="359"/>
        <end position="437"/>
    </location>
</feature>
<feature type="region of interest" description="Disordered" evidence="4">
    <location>
        <begin position="438"/>
        <end position="479"/>
    </location>
</feature>
<feature type="compositionally biased region" description="Basic residues" evidence="4">
    <location>
        <begin position="469"/>
        <end position="479"/>
    </location>
</feature>
<feature type="binding site" evidence="1">
    <location>
        <begin position="166"/>
        <end position="173"/>
    </location>
    <ligand>
        <name>GTP</name>
        <dbReference type="ChEBI" id="CHEBI:37565"/>
    </ligand>
</feature>
<feature type="binding site" evidence="1">
    <location>
        <position position="173"/>
    </location>
    <ligand>
        <name>Mg(2+)</name>
        <dbReference type="ChEBI" id="CHEBI:18420"/>
    </ligand>
</feature>
<feature type="binding site" evidence="1">
    <location>
        <begin position="191"/>
        <end position="195"/>
    </location>
    <ligand>
        <name>GTP</name>
        <dbReference type="ChEBI" id="CHEBI:37565"/>
    </ligand>
</feature>
<feature type="binding site" evidence="1">
    <location>
        <position position="193"/>
    </location>
    <ligand>
        <name>Mg(2+)</name>
        <dbReference type="ChEBI" id="CHEBI:18420"/>
    </ligand>
</feature>
<feature type="binding site" evidence="1">
    <location>
        <begin position="212"/>
        <end position="215"/>
    </location>
    <ligand>
        <name>GTP</name>
        <dbReference type="ChEBI" id="CHEBI:37565"/>
    </ligand>
</feature>
<feature type="binding site" evidence="1">
    <location>
        <begin position="292"/>
        <end position="295"/>
    </location>
    <ligand>
        <name>GTP</name>
        <dbReference type="ChEBI" id="CHEBI:37565"/>
    </ligand>
</feature>
<feature type="binding site" evidence="1">
    <location>
        <begin position="322"/>
        <end position="324"/>
    </location>
    <ligand>
        <name>GTP</name>
        <dbReference type="ChEBI" id="CHEBI:37565"/>
    </ligand>
</feature>
<proteinExistence type="inferred from homology"/>
<gene>
    <name evidence="1" type="primary">obg</name>
    <name type="ordered locus">ML1465</name>
</gene>
<evidence type="ECO:0000255" key="1">
    <source>
        <dbReference type="HAMAP-Rule" id="MF_01454"/>
    </source>
</evidence>
<evidence type="ECO:0000255" key="2">
    <source>
        <dbReference type="PROSITE-ProRule" id="PRU01229"/>
    </source>
</evidence>
<evidence type="ECO:0000255" key="3">
    <source>
        <dbReference type="PROSITE-ProRule" id="PRU01231"/>
    </source>
</evidence>
<evidence type="ECO:0000256" key="4">
    <source>
        <dbReference type="SAM" id="MobiDB-lite"/>
    </source>
</evidence>
<dbReference type="EC" id="3.6.5.-" evidence="1"/>
<dbReference type="EMBL" id="AL583922">
    <property type="protein sequence ID" value="CAC30415.1"/>
    <property type="molecule type" value="Genomic_DNA"/>
</dbReference>
<dbReference type="PIR" id="B87092">
    <property type="entry name" value="B87092"/>
</dbReference>
<dbReference type="RefSeq" id="NP_302030.1">
    <property type="nucleotide sequence ID" value="NC_002677.1"/>
</dbReference>
<dbReference type="SMR" id="Q9CBZ4"/>
<dbReference type="STRING" id="272631.gene:17575303"/>
<dbReference type="KEGG" id="mle:ML1465"/>
<dbReference type="PATRIC" id="fig|272631.5.peg.2741"/>
<dbReference type="Leproma" id="ML1465"/>
<dbReference type="eggNOG" id="COG0536">
    <property type="taxonomic scope" value="Bacteria"/>
</dbReference>
<dbReference type="HOGENOM" id="CLU_011747_2_1_11"/>
<dbReference type="OrthoDB" id="9807318at2"/>
<dbReference type="Proteomes" id="UP000000806">
    <property type="component" value="Chromosome"/>
</dbReference>
<dbReference type="GO" id="GO:0005737">
    <property type="term" value="C:cytoplasm"/>
    <property type="evidence" value="ECO:0007669"/>
    <property type="project" value="UniProtKB-SubCell"/>
</dbReference>
<dbReference type="GO" id="GO:0005525">
    <property type="term" value="F:GTP binding"/>
    <property type="evidence" value="ECO:0007669"/>
    <property type="project" value="UniProtKB-UniRule"/>
</dbReference>
<dbReference type="GO" id="GO:0003924">
    <property type="term" value="F:GTPase activity"/>
    <property type="evidence" value="ECO:0007669"/>
    <property type="project" value="UniProtKB-UniRule"/>
</dbReference>
<dbReference type="GO" id="GO:0000287">
    <property type="term" value="F:magnesium ion binding"/>
    <property type="evidence" value="ECO:0007669"/>
    <property type="project" value="InterPro"/>
</dbReference>
<dbReference type="GO" id="GO:0042254">
    <property type="term" value="P:ribosome biogenesis"/>
    <property type="evidence" value="ECO:0007669"/>
    <property type="project" value="UniProtKB-UniRule"/>
</dbReference>
<dbReference type="CDD" id="cd01898">
    <property type="entry name" value="Obg"/>
    <property type="match status" value="1"/>
</dbReference>
<dbReference type="FunFam" id="2.70.210.12:FF:000001">
    <property type="entry name" value="GTPase Obg"/>
    <property type="match status" value="1"/>
</dbReference>
<dbReference type="Gene3D" id="3.30.300.350">
    <property type="entry name" value="GTP-binding protein OBG, C-terminal domain"/>
    <property type="match status" value="1"/>
</dbReference>
<dbReference type="Gene3D" id="2.70.210.12">
    <property type="entry name" value="GTP1/OBG domain"/>
    <property type="match status" value="1"/>
</dbReference>
<dbReference type="Gene3D" id="3.40.50.300">
    <property type="entry name" value="P-loop containing nucleotide triphosphate hydrolases"/>
    <property type="match status" value="1"/>
</dbReference>
<dbReference type="HAMAP" id="MF_01454">
    <property type="entry name" value="GTPase_Obg"/>
    <property type="match status" value="1"/>
</dbReference>
<dbReference type="InterPro" id="IPR031167">
    <property type="entry name" value="G_OBG"/>
</dbReference>
<dbReference type="InterPro" id="IPR006073">
    <property type="entry name" value="GTP-bd"/>
</dbReference>
<dbReference type="InterPro" id="IPR014100">
    <property type="entry name" value="GTP-bd_Obg/CgtA"/>
</dbReference>
<dbReference type="InterPro" id="IPR036346">
    <property type="entry name" value="GTP-bd_prot_GTP1/OBG_C_sf"/>
</dbReference>
<dbReference type="InterPro" id="IPR006074">
    <property type="entry name" value="GTP1-OBG_CS"/>
</dbReference>
<dbReference type="InterPro" id="IPR006169">
    <property type="entry name" value="GTP1_OBG_dom"/>
</dbReference>
<dbReference type="InterPro" id="IPR036726">
    <property type="entry name" value="GTP1_OBG_dom_sf"/>
</dbReference>
<dbReference type="InterPro" id="IPR045086">
    <property type="entry name" value="OBG_GTPase"/>
</dbReference>
<dbReference type="InterPro" id="IPR015349">
    <property type="entry name" value="OCT_dom"/>
</dbReference>
<dbReference type="InterPro" id="IPR027417">
    <property type="entry name" value="P-loop_NTPase"/>
</dbReference>
<dbReference type="NCBIfam" id="TIGR02729">
    <property type="entry name" value="Obg_CgtA"/>
    <property type="match status" value="1"/>
</dbReference>
<dbReference type="NCBIfam" id="TIGR03595">
    <property type="entry name" value="Obg_CgtA_exten"/>
    <property type="match status" value="1"/>
</dbReference>
<dbReference type="NCBIfam" id="NF008954">
    <property type="entry name" value="PRK12296.1"/>
    <property type="match status" value="1"/>
</dbReference>
<dbReference type="NCBIfam" id="NF008955">
    <property type="entry name" value="PRK12297.1"/>
    <property type="match status" value="1"/>
</dbReference>
<dbReference type="NCBIfam" id="NF008956">
    <property type="entry name" value="PRK12299.1"/>
    <property type="match status" value="1"/>
</dbReference>
<dbReference type="PANTHER" id="PTHR11702">
    <property type="entry name" value="DEVELOPMENTALLY REGULATED GTP-BINDING PROTEIN-RELATED"/>
    <property type="match status" value="1"/>
</dbReference>
<dbReference type="PANTHER" id="PTHR11702:SF31">
    <property type="entry name" value="MITOCHONDRIAL RIBOSOME-ASSOCIATED GTPASE 2"/>
    <property type="match status" value="1"/>
</dbReference>
<dbReference type="Pfam" id="PF09269">
    <property type="entry name" value="DUF1967"/>
    <property type="match status" value="1"/>
</dbReference>
<dbReference type="Pfam" id="PF01018">
    <property type="entry name" value="GTP1_OBG"/>
    <property type="match status" value="1"/>
</dbReference>
<dbReference type="Pfam" id="PF01926">
    <property type="entry name" value="MMR_HSR1"/>
    <property type="match status" value="1"/>
</dbReference>
<dbReference type="PRINTS" id="PR00326">
    <property type="entry name" value="GTP1OBG"/>
</dbReference>
<dbReference type="SUPFAM" id="SSF102741">
    <property type="entry name" value="Obg GTP-binding protein C-terminal domain"/>
    <property type="match status" value="1"/>
</dbReference>
<dbReference type="SUPFAM" id="SSF82051">
    <property type="entry name" value="Obg GTP-binding protein N-terminal domain"/>
    <property type="match status" value="1"/>
</dbReference>
<dbReference type="SUPFAM" id="SSF52540">
    <property type="entry name" value="P-loop containing nucleoside triphosphate hydrolases"/>
    <property type="match status" value="1"/>
</dbReference>
<dbReference type="PROSITE" id="PS51710">
    <property type="entry name" value="G_OBG"/>
    <property type="match status" value="1"/>
</dbReference>
<dbReference type="PROSITE" id="PS00905">
    <property type="entry name" value="GTP1_OBG"/>
    <property type="match status" value="1"/>
</dbReference>
<dbReference type="PROSITE" id="PS51883">
    <property type="entry name" value="OBG"/>
    <property type="match status" value="1"/>
</dbReference>
<dbReference type="PROSITE" id="PS51881">
    <property type="entry name" value="OCT"/>
    <property type="match status" value="1"/>
</dbReference>
<protein>
    <recommendedName>
        <fullName evidence="1">GTPase Obg</fullName>
        <ecNumber evidence="1">3.6.5.-</ecNumber>
    </recommendedName>
    <alternativeName>
        <fullName evidence="1">GTP-binding protein Obg</fullName>
    </alternativeName>
</protein>
<organism>
    <name type="scientific">Mycobacterium leprae (strain TN)</name>
    <dbReference type="NCBI Taxonomy" id="272631"/>
    <lineage>
        <taxon>Bacteria</taxon>
        <taxon>Bacillati</taxon>
        <taxon>Actinomycetota</taxon>
        <taxon>Actinomycetes</taxon>
        <taxon>Mycobacteriales</taxon>
        <taxon>Mycobacteriaceae</taxon>
        <taxon>Mycobacterium</taxon>
    </lineage>
</organism>
<accession>Q9CBZ4</accession>
<name>OBG_MYCLE</name>